<comment type="function">
    <text evidence="1">F(1)F(0) ATP synthase produces ATP from ADP in the presence of a proton or sodium gradient. F-type ATPases consist of two structural domains, F(1) containing the extramembraneous catalytic core and F(0) containing the membrane proton channel, linked together by a central stalk and a peripheral stalk. During catalysis, ATP synthesis in the catalytic domain of F(1) is coupled via a rotary mechanism of the central stalk subunits to proton translocation.</text>
</comment>
<comment type="function">
    <text evidence="1">This protein is part of the stalk that links CF(0) to CF(1). It either transmits conformational changes from CF(0) to CF(1) or is implicated in proton conduction.</text>
</comment>
<comment type="subunit">
    <text evidence="1">F-type ATPases have 2 components, F(1) - the catalytic core - and F(0) - the membrane proton channel. F(1) has five subunits: alpha(3), beta(3), gamma(1), delta(1), epsilon(1). F(0) has three main subunits: a(1), b(2) and c(10-14). The alpha and beta chains form an alternating ring which encloses part of the gamma chain. F(1) is attached to F(0) by a central stalk formed by the gamma and epsilon chains, while a peripheral stalk is formed by the delta and b chains.</text>
</comment>
<comment type="subcellular location">
    <subcellularLocation>
        <location evidence="1">Cell membrane</location>
        <topology evidence="1">Peripheral membrane protein</topology>
    </subcellularLocation>
</comment>
<comment type="similarity">
    <text evidence="1">Belongs to the ATPase delta chain family.</text>
</comment>
<protein>
    <recommendedName>
        <fullName evidence="1">ATP synthase subunit delta</fullName>
    </recommendedName>
    <alternativeName>
        <fullName evidence="1">ATP synthase F(1) sector subunit delta</fullName>
    </alternativeName>
    <alternativeName>
        <fullName evidence="1">F-type ATPase subunit delta</fullName>
        <shortName evidence="1">F-ATPase subunit delta</shortName>
    </alternativeName>
</protein>
<accession>B8DWS5</accession>
<evidence type="ECO:0000255" key="1">
    <source>
        <dbReference type="HAMAP-Rule" id="MF_01416"/>
    </source>
</evidence>
<dbReference type="EMBL" id="CP001213">
    <property type="protein sequence ID" value="ACL28926.1"/>
    <property type="molecule type" value="Genomic_DNA"/>
</dbReference>
<dbReference type="RefSeq" id="WP_004269232.1">
    <property type="nucleotide sequence ID" value="NC_011835.1"/>
</dbReference>
<dbReference type="SMR" id="B8DWS5"/>
<dbReference type="STRING" id="442563.BLA_0633"/>
<dbReference type="KEGG" id="bla:BLA_0633"/>
<dbReference type="HOGENOM" id="CLU_088880_0_0_11"/>
<dbReference type="Proteomes" id="UP000002456">
    <property type="component" value="Chromosome"/>
</dbReference>
<dbReference type="GO" id="GO:0005886">
    <property type="term" value="C:plasma membrane"/>
    <property type="evidence" value="ECO:0007669"/>
    <property type="project" value="UniProtKB-SubCell"/>
</dbReference>
<dbReference type="GO" id="GO:0045259">
    <property type="term" value="C:proton-transporting ATP synthase complex"/>
    <property type="evidence" value="ECO:0007669"/>
    <property type="project" value="UniProtKB-KW"/>
</dbReference>
<dbReference type="GO" id="GO:0046933">
    <property type="term" value="F:proton-transporting ATP synthase activity, rotational mechanism"/>
    <property type="evidence" value="ECO:0007669"/>
    <property type="project" value="UniProtKB-UniRule"/>
</dbReference>
<dbReference type="HAMAP" id="MF_01416">
    <property type="entry name" value="ATP_synth_delta_bact"/>
    <property type="match status" value="1"/>
</dbReference>
<dbReference type="InterPro" id="IPR020781">
    <property type="entry name" value="ATPase_OSCP/d_CS"/>
</dbReference>
<dbReference type="InterPro" id="IPR000711">
    <property type="entry name" value="ATPase_OSCP/dsu"/>
</dbReference>
<dbReference type="NCBIfam" id="NF009967">
    <property type="entry name" value="PRK13430.1"/>
    <property type="match status" value="1"/>
</dbReference>
<dbReference type="PANTHER" id="PTHR11910">
    <property type="entry name" value="ATP SYNTHASE DELTA CHAIN"/>
    <property type="match status" value="1"/>
</dbReference>
<dbReference type="Pfam" id="PF00213">
    <property type="entry name" value="OSCP"/>
    <property type="match status" value="1"/>
</dbReference>
<dbReference type="PRINTS" id="PR00125">
    <property type="entry name" value="ATPASEDELTA"/>
</dbReference>
<dbReference type="PROSITE" id="PS00389">
    <property type="entry name" value="ATPASE_DELTA"/>
    <property type="match status" value="1"/>
</dbReference>
<keyword id="KW-0066">ATP synthesis</keyword>
<keyword id="KW-1003">Cell membrane</keyword>
<keyword id="KW-0139">CF(1)</keyword>
<keyword id="KW-0375">Hydrogen ion transport</keyword>
<keyword id="KW-0406">Ion transport</keyword>
<keyword id="KW-0472">Membrane</keyword>
<keyword id="KW-1185">Reference proteome</keyword>
<keyword id="KW-0813">Transport</keyword>
<reference key="1">
    <citation type="journal article" date="2009" name="J. Bacteriol.">
        <title>Genome sequence of the probiotic bacterium Bifidobacterium animalis subsp. lactis AD011.</title>
        <authorList>
            <person name="Kim J.F."/>
            <person name="Jeong H."/>
            <person name="Yu D.S."/>
            <person name="Choi S.-H."/>
            <person name="Hur C.-G."/>
            <person name="Park M.-S."/>
            <person name="Yoon S.H."/>
            <person name="Kim D.-W."/>
            <person name="Ji G.E."/>
            <person name="Park H.-S."/>
            <person name="Oh T.K."/>
        </authorList>
    </citation>
    <scope>NUCLEOTIDE SEQUENCE [LARGE SCALE GENOMIC DNA]</scope>
    <source>
        <strain>AD011</strain>
    </source>
</reference>
<organism>
    <name type="scientific">Bifidobacterium animalis subsp. lactis (strain AD011)</name>
    <dbReference type="NCBI Taxonomy" id="442563"/>
    <lineage>
        <taxon>Bacteria</taxon>
        <taxon>Bacillati</taxon>
        <taxon>Actinomycetota</taxon>
        <taxon>Actinomycetes</taxon>
        <taxon>Bifidobacteriales</taxon>
        <taxon>Bifidobacteriaceae</taxon>
        <taxon>Bifidobacterium</taxon>
    </lineage>
</organism>
<sequence>MQGEASRLADRESRDSFAAKLRESGNDAWEIGNELFTITYVFDHNPRIPRALTDPGRPTEDKVALLNNLLGKQALPLTMEILTDLVGRSWSRAGDIDNAIEDFAVDAMMYQADDEKKTLKVSVQLAQLQSALLNLPVVRSDLSDSQGPLNVRYELLHALIDGADFDRITVRLAEHCTRNPRNRRYLESVQWLINKFSRHMGESMVTVTTATPLSDEQSDKLARIYTKKTGRPVHIHSVVDPTVMGGMRIQVGDEVTDNTVVAQLENLKRKVKAGVSE</sequence>
<proteinExistence type="inferred from homology"/>
<name>ATPD_BIFA0</name>
<feature type="chain" id="PRO_0000382061" description="ATP synthase subunit delta">
    <location>
        <begin position="1"/>
        <end position="277"/>
    </location>
</feature>
<gene>
    <name evidence="1" type="primary">atpH</name>
    <name type="ordered locus">BLA_0633</name>
</gene>